<comment type="function">
    <text evidence="1">May be involved in the mitochondrial lipid metabolism.</text>
</comment>
<comment type="subcellular location">
    <subcellularLocation>
        <location evidence="1">Mitochondrion</location>
    </subcellularLocation>
</comment>
<comment type="similarity">
    <text evidence="3">Belongs to the TRAFAC class YlqF/YawG GTPase family. GEP3 subfamily.</text>
</comment>
<dbReference type="EMBL" id="CH981526">
    <property type="protein sequence ID" value="EDK44805.1"/>
    <property type="molecule type" value="Genomic_DNA"/>
</dbReference>
<dbReference type="RefSeq" id="XP_001526426.1">
    <property type="nucleotide sequence ID" value="XM_001526376.1"/>
</dbReference>
<dbReference type="SMR" id="A5E047"/>
<dbReference type="FunCoup" id="A5E047">
    <property type="interactions" value="74"/>
</dbReference>
<dbReference type="STRING" id="379508.A5E047"/>
<dbReference type="GeneID" id="5233512"/>
<dbReference type="KEGG" id="lel:PVL30_003809"/>
<dbReference type="VEuPathDB" id="FungiDB:LELG_02984"/>
<dbReference type="eggNOG" id="ENOG502S067">
    <property type="taxonomic scope" value="Eukaryota"/>
</dbReference>
<dbReference type="HOGENOM" id="CLU_025792_0_0_1"/>
<dbReference type="InParanoid" id="A5E047"/>
<dbReference type="OMA" id="INDYCAR"/>
<dbReference type="OrthoDB" id="1696305at2759"/>
<dbReference type="Proteomes" id="UP000001996">
    <property type="component" value="Unassembled WGS sequence"/>
</dbReference>
<dbReference type="GO" id="GO:0005739">
    <property type="term" value="C:mitochondrion"/>
    <property type="evidence" value="ECO:0007669"/>
    <property type="project" value="UniProtKB-SubCell"/>
</dbReference>
<dbReference type="GO" id="GO:0005525">
    <property type="term" value="F:GTP binding"/>
    <property type="evidence" value="ECO:0007669"/>
    <property type="project" value="InterPro"/>
</dbReference>
<dbReference type="Gene3D" id="3.40.50.300">
    <property type="entry name" value="P-loop containing nucleotide triphosphate hydrolases"/>
    <property type="match status" value="1"/>
</dbReference>
<dbReference type="InterPro" id="IPR030378">
    <property type="entry name" value="G_CP_dom"/>
</dbReference>
<dbReference type="InterPro" id="IPR006073">
    <property type="entry name" value="GTP-bd"/>
</dbReference>
<dbReference type="InterPro" id="IPR050896">
    <property type="entry name" value="Mito_lipid_metab_GTPase"/>
</dbReference>
<dbReference type="InterPro" id="IPR027417">
    <property type="entry name" value="P-loop_NTPase"/>
</dbReference>
<dbReference type="PANTHER" id="PTHR46434">
    <property type="entry name" value="GENETIC INTERACTOR OF PROHIBITINS 3, MITOCHONDRIAL"/>
    <property type="match status" value="1"/>
</dbReference>
<dbReference type="PANTHER" id="PTHR46434:SF1">
    <property type="entry name" value="GENETIC INTERACTOR OF PROHIBITINS 3, MITOCHONDRIAL"/>
    <property type="match status" value="1"/>
</dbReference>
<dbReference type="Pfam" id="PF01926">
    <property type="entry name" value="MMR_HSR1"/>
    <property type="match status" value="1"/>
</dbReference>
<dbReference type="SUPFAM" id="SSF52540">
    <property type="entry name" value="P-loop containing nucleoside triphosphate hydrolases"/>
    <property type="match status" value="1"/>
</dbReference>
<dbReference type="PROSITE" id="PS51721">
    <property type="entry name" value="G_CP"/>
    <property type="match status" value="1"/>
</dbReference>
<accession>A5E047</accession>
<gene>
    <name type="primary">GEP3</name>
    <name type="synonym">FMP48</name>
    <name type="ORF">LELG_02984</name>
</gene>
<sequence length="665" mass="75759">MISRLIHSKHYLTLFRQNSSIAIPLLYSLELRCRSCGIKVQDKNKDEPGYYIKPVKLLNDSKTFSEQTQKLGLVVAADAPNILQNPIKKRPLDEAYDKLISKMSQSDKDLLINDFTLFGQPKYKDSKELETIPKNDKGETVKEVVNKIYTVKPDETSVECMRCRNIQYQSSYKMTDENFPISEMEQVLQNLPRASTAPLVYLFNANDFPMGINPNIFKFRNPKDIYFIMTKTDNLVADIKNKFNKSAILHEYTKNFVSDYLGIKYGVPKQNIFLSSSLKGWKLDELHRFIPDGSYIIGNTNCGKSTMIKSLMLNEELQNKKEQVRHVPFNTVSKIKDKFKQQFYQKVGPGVSYLPGFTRDIIPLNIGLKTVYDVPGFSSSPKIHYLYESIKEPKIIHRLIKGEKTFAKGYNGAQYKSFKGPQVLCFEGLGYLQLPKDCLFQIRNVTNFKIHAFSNIDKAAKLAQNIPPSLANDFAIGNHSLFSQFDKYLVPPFYGSIELVFENFGYIHIKPIGAKQSNELMKLYLYPGLQSIIRQPIINYITKTPTGFDKYGNALMKYDPVYKSEFALKRFRGGEEYQPLFSRLIPCVEDIEKFVGGGGGGAVAAAGAAAGAAETNIVDGNDAQGLAQSLRSQEYLQLNQFLKRRAKYDESYYMDASNKYDFWVE</sequence>
<organism>
    <name type="scientific">Lodderomyces elongisporus (strain ATCC 11503 / CBS 2605 / JCM 1781 / NBRC 1676 / NRRL YB-4239)</name>
    <name type="common">Yeast</name>
    <name type="synonym">Saccharomyces elongisporus</name>
    <dbReference type="NCBI Taxonomy" id="379508"/>
    <lineage>
        <taxon>Eukaryota</taxon>
        <taxon>Fungi</taxon>
        <taxon>Dikarya</taxon>
        <taxon>Ascomycota</taxon>
        <taxon>Saccharomycotina</taxon>
        <taxon>Pichiomycetes</taxon>
        <taxon>Debaryomycetaceae</taxon>
        <taxon>Candida/Lodderomyces clade</taxon>
        <taxon>Lodderomyces</taxon>
    </lineage>
</organism>
<feature type="transit peptide" description="Mitochondrion" evidence="2">
    <location>
        <begin position="1"/>
        <end position="17"/>
    </location>
</feature>
<feature type="chain" id="PRO_0000409637" description="Genetic interactor of prohibitins 3, mitochondrial">
    <location>
        <begin position="18"/>
        <end position="665"/>
    </location>
</feature>
<feature type="domain" description="CP-type G" evidence="3">
    <location>
        <begin position="185"/>
        <end position="380"/>
    </location>
</feature>
<evidence type="ECO:0000250" key="1"/>
<evidence type="ECO:0000255" key="2"/>
<evidence type="ECO:0000255" key="3">
    <source>
        <dbReference type="PROSITE-ProRule" id="PRU01058"/>
    </source>
</evidence>
<keyword id="KW-0496">Mitochondrion</keyword>
<keyword id="KW-1185">Reference proteome</keyword>
<keyword id="KW-0809">Transit peptide</keyword>
<protein>
    <recommendedName>
        <fullName>Genetic interactor of prohibitins 3, mitochondrial</fullName>
    </recommendedName>
    <alternativeName>
        <fullName>Found in mitochondrial proteome protein 38</fullName>
    </alternativeName>
</protein>
<reference key="1">
    <citation type="journal article" date="2009" name="Nature">
        <title>Evolution of pathogenicity and sexual reproduction in eight Candida genomes.</title>
        <authorList>
            <person name="Butler G."/>
            <person name="Rasmussen M.D."/>
            <person name="Lin M.F."/>
            <person name="Santos M.A.S."/>
            <person name="Sakthikumar S."/>
            <person name="Munro C.A."/>
            <person name="Rheinbay E."/>
            <person name="Grabherr M."/>
            <person name="Forche A."/>
            <person name="Reedy J.L."/>
            <person name="Agrafioti I."/>
            <person name="Arnaud M.B."/>
            <person name="Bates S."/>
            <person name="Brown A.J.P."/>
            <person name="Brunke S."/>
            <person name="Costanzo M.C."/>
            <person name="Fitzpatrick D.A."/>
            <person name="de Groot P.W.J."/>
            <person name="Harris D."/>
            <person name="Hoyer L.L."/>
            <person name="Hube B."/>
            <person name="Klis F.M."/>
            <person name="Kodira C."/>
            <person name="Lennard N."/>
            <person name="Logue M.E."/>
            <person name="Martin R."/>
            <person name="Neiman A.M."/>
            <person name="Nikolaou E."/>
            <person name="Quail M.A."/>
            <person name="Quinn J."/>
            <person name="Santos M.C."/>
            <person name="Schmitzberger F.F."/>
            <person name="Sherlock G."/>
            <person name="Shah P."/>
            <person name="Silverstein K.A.T."/>
            <person name="Skrzypek M.S."/>
            <person name="Soll D."/>
            <person name="Staggs R."/>
            <person name="Stansfield I."/>
            <person name="Stumpf M.P.H."/>
            <person name="Sudbery P.E."/>
            <person name="Srikantha T."/>
            <person name="Zeng Q."/>
            <person name="Berman J."/>
            <person name="Berriman M."/>
            <person name="Heitman J."/>
            <person name="Gow N.A.R."/>
            <person name="Lorenz M.C."/>
            <person name="Birren B.W."/>
            <person name="Kellis M."/>
            <person name="Cuomo C.A."/>
        </authorList>
    </citation>
    <scope>NUCLEOTIDE SEQUENCE [LARGE SCALE GENOMIC DNA]</scope>
    <source>
        <strain>ATCC 11503 / BCRC 21390 / CBS 2605 / JCM 1781 / NBRC 1676 / NRRL YB-4239</strain>
    </source>
</reference>
<proteinExistence type="inferred from homology"/>
<name>GEP3_LODEL</name>